<accession>C0PYB4</accession>
<gene>
    <name evidence="1" type="primary">uxuA</name>
    <name type="ordered locus">SPC_3203</name>
</gene>
<comment type="function">
    <text evidence="1">Catalyzes the dehydration of D-mannonate.</text>
</comment>
<comment type="catalytic activity">
    <reaction evidence="1">
        <text>D-mannonate = 2-dehydro-3-deoxy-D-gluconate + H2O</text>
        <dbReference type="Rhea" id="RHEA:20097"/>
        <dbReference type="ChEBI" id="CHEBI:15377"/>
        <dbReference type="ChEBI" id="CHEBI:17767"/>
        <dbReference type="ChEBI" id="CHEBI:57990"/>
        <dbReference type="EC" id="4.2.1.8"/>
    </reaction>
</comment>
<comment type="cofactor">
    <cofactor evidence="1">
        <name>Fe(2+)</name>
        <dbReference type="ChEBI" id="CHEBI:29033"/>
    </cofactor>
    <cofactor evidence="1">
        <name>Mn(2+)</name>
        <dbReference type="ChEBI" id="CHEBI:29035"/>
    </cofactor>
</comment>
<comment type="pathway">
    <text evidence="1">Carbohydrate metabolism; pentose and glucuronate interconversion.</text>
</comment>
<comment type="similarity">
    <text evidence="1">Belongs to the mannonate dehydratase family.</text>
</comment>
<protein>
    <recommendedName>
        <fullName evidence="1">Mannonate dehydratase</fullName>
        <ecNumber evidence="1">4.2.1.8</ecNumber>
    </recommendedName>
    <alternativeName>
        <fullName evidence="1">D-mannonate hydro-lyase</fullName>
    </alternativeName>
</protein>
<dbReference type="EC" id="4.2.1.8" evidence="1"/>
<dbReference type="EMBL" id="CP000857">
    <property type="protein sequence ID" value="ACN47288.1"/>
    <property type="molecule type" value="Genomic_DNA"/>
</dbReference>
<dbReference type="RefSeq" id="WP_000815488.1">
    <property type="nucleotide sequence ID" value="NC_012125.1"/>
</dbReference>
<dbReference type="SMR" id="C0PYB4"/>
<dbReference type="KEGG" id="sei:SPC_3203"/>
<dbReference type="HOGENOM" id="CLU_058621_2_0_6"/>
<dbReference type="UniPathway" id="UPA00246"/>
<dbReference type="Proteomes" id="UP000001599">
    <property type="component" value="Chromosome"/>
</dbReference>
<dbReference type="GO" id="GO:0008198">
    <property type="term" value="F:ferrous iron binding"/>
    <property type="evidence" value="ECO:0007669"/>
    <property type="project" value="TreeGrafter"/>
</dbReference>
<dbReference type="GO" id="GO:0030145">
    <property type="term" value="F:manganese ion binding"/>
    <property type="evidence" value="ECO:0007669"/>
    <property type="project" value="TreeGrafter"/>
</dbReference>
<dbReference type="GO" id="GO:0008927">
    <property type="term" value="F:mannonate dehydratase activity"/>
    <property type="evidence" value="ECO:0007669"/>
    <property type="project" value="UniProtKB-UniRule"/>
</dbReference>
<dbReference type="GO" id="GO:0042840">
    <property type="term" value="P:D-glucuronate catabolic process"/>
    <property type="evidence" value="ECO:0007669"/>
    <property type="project" value="TreeGrafter"/>
</dbReference>
<dbReference type="FunFam" id="3.20.20.150:FF:000004">
    <property type="entry name" value="Mannonate dehydratase"/>
    <property type="match status" value="1"/>
</dbReference>
<dbReference type="FunFam" id="3.20.20.150:FF:000005">
    <property type="entry name" value="Mannonate dehydratase"/>
    <property type="match status" value="1"/>
</dbReference>
<dbReference type="Gene3D" id="3.20.20.150">
    <property type="entry name" value="Divalent-metal-dependent TIM barrel enzymes"/>
    <property type="match status" value="2"/>
</dbReference>
<dbReference type="HAMAP" id="MF_00106">
    <property type="entry name" value="UxuA"/>
    <property type="match status" value="1"/>
</dbReference>
<dbReference type="InterPro" id="IPR004628">
    <property type="entry name" value="Man_deHydtase"/>
</dbReference>
<dbReference type="InterPro" id="IPR036237">
    <property type="entry name" value="Xyl_isomerase-like_sf"/>
</dbReference>
<dbReference type="NCBIfam" id="NF003027">
    <property type="entry name" value="PRK03906.1"/>
    <property type="match status" value="1"/>
</dbReference>
<dbReference type="NCBIfam" id="TIGR00695">
    <property type="entry name" value="uxuA"/>
    <property type="match status" value="1"/>
</dbReference>
<dbReference type="PANTHER" id="PTHR30387">
    <property type="entry name" value="MANNONATE DEHYDRATASE"/>
    <property type="match status" value="1"/>
</dbReference>
<dbReference type="PANTHER" id="PTHR30387:SF2">
    <property type="entry name" value="MANNONATE DEHYDRATASE"/>
    <property type="match status" value="1"/>
</dbReference>
<dbReference type="Pfam" id="PF03786">
    <property type="entry name" value="UxuA"/>
    <property type="match status" value="1"/>
</dbReference>
<dbReference type="PIRSF" id="PIRSF016049">
    <property type="entry name" value="Man_dehyd"/>
    <property type="match status" value="1"/>
</dbReference>
<dbReference type="SUPFAM" id="SSF51658">
    <property type="entry name" value="Xylose isomerase-like"/>
    <property type="match status" value="1"/>
</dbReference>
<feature type="chain" id="PRO_1000197933" description="Mannonate dehydratase">
    <location>
        <begin position="1"/>
        <end position="394"/>
    </location>
</feature>
<sequence>MKQTWRWYGPNDPVTLSDVRQAGATGVVTALHHIPNGEIWSVDEIQKRKAIVEEAGLEWSVVESVPIHEDIKTHTGQYDLWIKNYQQTLRNLAQCGIYTVCYNFMPVLDWTRTDLEYVLPDGSKALRFDQIEFAAFELHILKRPGAEADYTAEEIAQAERRFATMSEEDKARLTRNIIAGLPGAEEGYTLDQFRQHLATYKDIDKAKLREHFAYFLKAIIPVAYEVGVRMAVHPDDPPRPILGLPRIVSTIEDMQWMVETVNSMANGFTMCTGSYGVRADNDLVDMIKQFGPRIYFTHLRSTLREENPKTFHEAAHLHGDVDMYEVVKAIVEEEHRRKAEGSDDLIPMRPDHGHQMLDDLKKKTNPGYSAIGRLKGLAEVRGVELAIQRAFFSK</sequence>
<keyword id="KW-0408">Iron</keyword>
<keyword id="KW-0456">Lyase</keyword>
<keyword id="KW-0464">Manganese</keyword>
<evidence type="ECO:0000255" key="1">
    <source>
        <dbReference type="HAMAP-Rule" id="MF_00106"/>
    </source>
</evidence>
<proteinExistence type="inferred from homology"/>
<name>UXUA_SALPC</name>
<reference key="1">
    <citation type="journal article" date="2009" name="PLoS ONE">
        <title>Salmonella paratyphi C: genetic divergence from Salmonella choleraesuis and pathogenic convergence with Salmonella typhi.</title>
        <authorList>
            <person name="Liu W.-Q."/>
            <person name="Feng Y."/>
            <person name="Wang Y."/>
            <person name="Zou Q.-H."/>
            <person name="Chen F."/>
            <person name="Guo J.-T."/>
            <person name="Peng Y.-H."/>
            <person name="Jin Y."/>
            <person name="Li Y.-G."/>
            <person name="Hu S.-N."/>
            <person name="Johnston R.N."/>
            <person name="Liu G.-R."/>
            <person name="Liu S.-L."/>
        </authorList>
    </citation>
    <scope>NUCLEOTIDE SEQUENCE [LARGE SCALE GENOMIC DNA]</scope>
    <source>
        <strain>RKS4594</strain>
    </source>
</reference>
<organism>
    <name type="scientific">Salmonella paratyphi C (strain RKS4594)</name>
    <dbReference type="NCBI Taxonomy" id="476213"/>
    <lineage>
        <taxon>Bacteria</taxon>
        <taxon>Pseudomonadati</taxon>
        <taxon>Pseudomonadota</taxon>
        <taxon>Gammaproteobacteria</taxon>
        <taxon>Enterobacterales</taxon>
        <taxon>Enterobacteriaceae</taxon>
        <taxon>Salmonella</taxon>
    </lineage>
</organism>